<name>PAFA_BIFLD</name>
<organism>
    <name type="scientific">Bifidobacterium longum (strain DJO10A)</name>
    <dbReference type="NCBI Taxonomy" id="205913"/>
    <lineage>
        <taxon>Bacteria</taxon>
        <taxon>Bacillati</taxon>
        <taxon>Actinomycetota</taxon>
        <taxon>Actinomycetes</taxon>
        <taxon>Bifidobacteriales</taxon>
        <taxon>Bifidobacteriaceae</taxon>
        <taxon>Bifidobacterium</taxon>
    </lineage>
</organism>
<evidence type="ECO:0000255" key="1">
    <source>
        <dbReference type="HAMAP-Rule" id="MF_02111"/>
    </source>
</evidence>
<reference key="1">
    <citation type="journal article" date="2008" name="BMC Genomics">
        <title>Comparative genomic analysis of the gut bacterium Bifidobacterium longum reveals loci susceptible to deletion during pure culture growth.</title>
        <authorList>
            <person name="Lee J.H."/>
            <person name="Karamychev V.N."/>
            <person name="Kozyavkin S.A."/>
            <person name="Mills D."/>
            <person name="Pavlov A.R."/>
            <person name="Pavlova N.V."/>
            <person name="Polouchine N.N."/>
            <person name="Richardson P.M."/>
            <person name="Shakhova V.V."/>
            <person name="Slesarev A.I."/>
            <person name="Weimer B."/>
            <person name="O'Sullivan D.J."/>
        </authorList>
    </citation>
    <scope>NUCLEOTIDE SEQUENCE [LARGE SCALE GENOMIC DNA]</scope>
    <source>
        <strain>DJO10A</strain>
    </source>
</reference>
<feature type="chain" id="PRO_0000395901" description="Pup--protein ligase">
    <location>
        <begin position="1"/>
        <end position="486"/>
    </location>
</feature>
<feature type="active site" description="Proton acceptor" evidence="1">
    <location>
        <position position="80"/>
    </location>
</feature>
<feature type="binding site" evidence="1">
    <location>
        <position position="33"/>
    </location>
    <ligand>
        <name>Mg(2+)</name>
        <dbReference type="ChEBI" id="CHEBI:18420"/>
    </ligand>
</feature>
<feature type="binding site" evidence="1">
    <location>
        <position position="76"/>
    </location>
    <ligand>
        <name>ATP</name>
        <dbReference type="ChEBI" id="CHEBI:30616"/>
    </ligand>
</feature>
<feature type="binding site" evidence="1">
    <location>
        <position position="78"/>
    </location>
    <ligand>
        <name>Mg(2+)</name>
        <dbReference type="ChEBI" id="CHEBI:18420"/>
    </ligand>
</feature>
<feature type="binding site" evidence="1">
    <location>
        <position position="86"/>
    </location>
    <ligand>
        <name>Mg(2+)</name>
        <dbReference type="ChEBI" id="CHEBI:18420"/>
    </ligand>
</feature>
<feature type="binding site" evidence="1">
    <location>
        <position position="89"/>
    </location>
    <ligand>
        <name>ATP</name>
        <dbReference type="ChEBI" id="CHEBI:30616"/>
    </ligand>
</feature>
<feature type="binding site" evidence="1">
    <location>
        <position position="451"/>
    </location>
    <ligand>
        <name>ATP</name>
        <dbReference type="ChEBI" id="CHEBI:30616"/>
    </ligand>
</feature>
<gene>
    <name evidence="1" type="primary">pafA</name>
    <name type="ordered locus">BLD_1975</name>
</gene>
<sequence>MPQLRDSGTRSLHATEPVPSAEMDGFCRIFGVETEYGVAVTGAERPVDAGQVAMTMFQPIVSRSRSTNTYLTNGSRLYLDVGSHPEYATAEARDPREALAQDLAGEHVMRNLALKAQRKLRESYGAHATIHVFKNNVDSAGHAFGCHENYLVRRFVPLETIEHQLLPFLITRQLYTGAGRMTPDGFQITQRADFLDEAVSSATTRSRPMVNTRDEPHADPDSFRRLHVIIGDSNRSQWSTWMKLAVTHLVLCAIEDAFRHGTPSGFEHCAFADPAAANRTVSRFLDDPHAELTLESGESVSALGLQRRYYAAVKAFIETHVDALASSLPATTIDTIMGEWSRVLDALERGAYDALADRVDWAAKKRLFDALKRRRPDVTFAQMEQLELDYHDIANGRLYGSLVARNQMRELLTGDNVEYAVHNPPTDTRAALRGRFVDAALNVGAQFSADWTHLTLTAPERREAILLDPFEAEPTLGFEQLMEALN</sequence>
<keyword id="KW-0067">ATP-binding</keyword>
<keyword id="KW-0436">Ligase</keyword>
<keyword id="KW-0460">Magnesium</keyword>
<keyword id="KW-0479">Metal-binding</keyword>
<keyword id="KW-0547">Nucleotide-binding</keyword>
<keyword id="KW-0833">Ubl conjugation pathway</keyword>
<comment type="function">
    <text evidence="1">Catalyzes the covalent attachment of the prokaryotic ubiquitin-like protein modifier Pup to the proteasomal substrate proteins, thereby targeting them for proteasomal degradation. This tagging system is termed pupylation. The ligation reaction involves the side-chain carboxylate of the C-terminal glutamate of Pup and the side-chain amino group of a substrate lysine.</text>
</comment>
<comment type="catalytic activity">
    <reaction evidence="1">
        <text>ATP + [prokaryotic ubiquitin-like protein]-L-glutamate + [protein]-L-lysine = ADP + phosphate + N(6)-([prokaryotic ubiquitin-like protein]-gamma-L-glutamyl)-[protein]-L-lysine.</text>
        <dbReference type="EC" id="6.3.1.19"/>
    </reaction>
</comment>
<comment type="pathway">
    <text evidence="1">Protein degradation; proteasomal Pup-dependent pathway.</text>
</comment>
<comment type="pathway">
    <text evidence="1">Protein modification; protein pupylation.</text>
</comment>
<comment type="miscellaneous">
    <text evidence="1">The reaction mechanism probably proceeds via the activation of Pup by phosphorylation of its C-terminal glutamate, which is then subject to nucleophilic attack by the substrate lysine, resulting in an isopeptide bond and the release of phosphate as a good leaving group.</text>
</comment>
<comment type="similarity">
    <text evidence="1">Belongs to the Pup ligase/Pup deamidase family. Pup-conjugating enzyme subfamily.</text>
</comment>
<proteinExistence type="inferred from homology"/>
<protein>
    <recommendedName>
        <fullName evidence="1">Pup--protein ligase</fullName>
        <ecNumber evidence="1">6.3.1.19</ecNumber>
    </recommendedName>
    <alternativeName>
        <fullName evidence="1">Proteasome accessory factor A</fullName>
    </alternativeName>
    <alternativeName>
        <fullName evidence="1">Pup-conjugating enzyme</fullName>
    </alternativeName>
</protein>
<accession>B3DRN8</accession>
<dbReference type="EC" id="6.3.1.19" evidence="1"/>
<dbReference type="EMBL" id="CP000605">
    <property type="protein sequence ID" value="ACD99420.1"/>
    <property type="molecule type" value="Genomic_DNA"/>
</dbReference>
<dbReference type="RefSeq" id="WP_010080937.1">
    <property type="nucleotide sequence ID" value="NZ_AABM02000004.1"/>
</dbReference>
<dbReference type="SMR" id="B3DRN8"/>
<dbReference type="KEGG" id="blj:BLD_1975"/>
<dbReference type="HOGENOM" id="CLU_040524_0_1_11"/>
<dbReference type="UniPathway" id="UPA00997"/>
<dbReference type="UniPathway" id="UPA00998"/>
<dbReference type="Proteomes" id="UP000002419">
    <property type="component" value="Chromosome"/>
</dbReference>
<dbReference type="GO" id="GO:0005524">
    <property type="term" value="F:ATP binding"/>
    <property type="evidence" value="ECO:0007669"/>
    <property type="project" value="UniProtKB-UniRule"/>
</dbReference>
<dbReference type="GO" id="GO:0016879">
    <property type="term" value="F:ligase activity, forming carbon-nitrogen bonds"/>
    <property type="evidence" value="ECO:0007669"/>
    <property type="project" value="InterPro"/>
</dbReference>
<dbReference type="GO" id="GO:0000287">
    <property type="term" value="F:magnesium ion binding"/>
    <property type="evidence" value="ECO:0007669"/>
    <property type="project" value="UniProtKB-UniRule"/>
</dbReference>
<dbReference type="GO" id="GO:0019787">
    <property type="term" value="F:ubiquitin-like protein transferase activity"/>
    <property type="evidence" value="ECO:0007669"/>
    <property type="project" value="UniProtKB-UniRule"/>
</dbReference>
<dbReference type="GO" id="GO:0019941">
    <property type="term" value="P:modification-dependent protein catabolic process"/>
    <property type="evidence" value="ECO:0007669"/>
    <property type="project" value="UniProtKB-UniRule"/>
</dbReference>
<dbReference type="GO" id="GO:0010498">
    <property type="term" value="P:proteasomal protein catabolic process"/>
    <property type="evidence" value="ECO:0007669"/>
    <property type="project" value="UniProtKB-UniRule"/>
</dbReference>
<dbReference type="GO" id="GO:0070490">
    <property type="term" value="P:protein pupylation"/>
    <property type="evidence" value="ECO:0007669"/>
    <property type="project" value="UniProtKB-UniRule"/>
</dbReference>
<dbReference type="HAMAP" id="MF_02111">
    <property type="entry name" value="Pup_ligase"/>
    <property type="match status" value="1"/>
</dbReference>
<dbReference type="InterPro" id="IPR022279">
    <property type="entry name" value="Pup_ligase"/>
</dbReference>
<dbReference type="InterPro" id="IPR004347">
    <property type="entry name" value="Pup_ligase/deamidase"/>
</dbReference>
<dbReference type="NCBIfam" id="TIGR03686">
    <property type="entry name" value="pupylate_PafA"/>
    <property type="match status" value="1"/>
</dbReference>
<dbReference type="PANTHER" id="PTHR42307">
    <property type="entry name" value="PUP DEAMIDASE/DEPUPYLASE"/>
    <property type="match status" value="1"/>
</dbReference>
<dbReference type="PANTHER" id="PTHR42307:SF3">
    <property type="entry name" value="PUP--PROTEIN LIGASE"/>
    <property type="match status" value="1"/>
</dbReference>
<dbReference type="Pfam" id="PF03136">
    <property type="entry name" value="Pup_ligase"/>
    <property type="match status" value="1"/>
</dbReference>
<dbReference type="PIRSF" id="PIRSF018077">
    <property type="entry name" value="UCP018077"/>
    <property type="match status" value="1"/>
</dbReference>